<feature type="chain" id="PRO_1000136827" description="tRNA pseudouridine synthase D">
    <location>
        <begin position="1"/>
        <end position="348"/>
    </location>
</feature>
<feature type="domain" description="TRUD" evidence="1">
    <location>
        <begin position="158"/>
        <end position="304"/>
    </location>
</feature>
<feature type="active site" description="Nucleophile" evidence="1">
    <location>
        <position position="81"/>
    </location>
</feature>
<sequence>MSDIMSTFSWLYGKPVATGKLKQLPEHFIVKEVLGYEFTGKGEHLMVKIRKTGENTKYVANEFAKFCGVKSKDISWAGLKDRHAVTEQWLSVHLPKSDHLNFVLFEVAHPGVEILEMTRHHKKLRPGDLLGNSFQLIATEVTDMDDVLARLEKVKVTGVPNYFGAQRFGHEGNNVTEARRWGRENVRTRDNTKRSFYLSAARSWIFNHIISQRITEGYFSLPVDGDILLDQNDRTVNENVTSEDCIQKIKKGELSISAALAGDNQLPTTEKALMFEQPQLDAEPDLMALIRGNRMRHERRSIELHPENLHWSVEGDQLTLNFSLTSGSFATVIVRELLQEIEVERTYD</sequence>
<organism>
    <name type="scientific">Aliivibrio salmonicida (strain LFI1238)</name>
    <name type="common">Vibrio salmonicida (strain LFI1238)</name>
    <dbReference type="NCBI Taxonomy" id="316275"/>
    <lineage>
        <taxon>Bacteria</taxon>
        <taxon>Pseudomonadati</taxon>
        <taxon>Pseudomonadota</taxon>
        <taxon>Gammaproteobacteria</taxon>
        <taxon>Vibrionales</taxon>
        <taxon>Vibrionaceae</taxon>
        <taxon>Aliivibrio</taxon>
    </lineage>
</organism>
<reference key="1">
    <citation type="journal article" date="2008" name="BMC Genomics">
        <title>The genome sequence of the fish pathogen Aliivibrio salmonicida strain LFI1238 shows extensive evidence of gene decay.</title>
        <authorList>
            <person name="Hjerde E."/>
            <person name="Lorentzen M.S."/>
            <person name="Holden M.T."/>
            <person name="Seeger K."/>
            <person name="Paulsen S."/>
            <person name="Bason N."/>
            <person name="Churcher C."/>
            <person name="Harris D."/>
            <person name="Norbertczak H."/>
            <person name="Quail M.A."/>
            <person name="Sanders S."/>
            <person name="Thurston S."/>
            <person name="Parkhill J."/>
            <person name="Willassen N.P."/>
            <person name="Thomson N.R."/>
        </authorList>
    </citation>
    <scope>NUCLEOTIDE SEQUENCE [LARGE SCALE GENOMIC DNA]</scope>
    <source>
        <strain>LFI1238</strain>
    </source>
</reference>
<gene>
    <name evidence="1" type="primary">truD</name>
    <name type="ordered locus">VSAL_I2510</name>
</gene>
<accession>B6EKL4</accession>
<name>TRUD_ALISL</name>
<proteinExistence type="inferred from homology"/>
<evidence type="ECO:0000255" key="1">
    <source>
        <dbReference type="HAMAP-Rule" id="MF_01082"/>
    </source>
</evidence>
<keyword id="KW-0413">Isomerase</keyword>
<keyword id="KW-0819">tRNA processing</keyword>
<protein>
    <recommendedName>
        <fullName evidence="1">tRNA pseudouridine synthase D</fullName>
        <ecNumber evidence="1">5.4.99.27</ecNumber>
    </recommendedName>
    <alternativeName>
        <fullName evidence="1">tRNA pseudouridine(13) synthase</fullName>
    </alternativeName>
    <alternativeName>
        <fullName evidence="1">tRNA pseudouridylate synthase D</fullName>
    </alternativeName>
    <alternativeName>
        <fullName evidence="1">tRNA-uridine isomerase D</fullName>
    </alternativeName>
</protein>
<dbReference type="EC" id="5.4.99.27" evidence="1"/>
<dbReference type="EMBL" id="FM178379">
    <property type="protein sequence ID" value="CAQ80194.1"/>
    <property type="molecule type" value="Genomic_DNA"/>
</dbReference>
<dbReference type="RefSeq" id="WP_012550982.1">
    <property type="nucleotide sequence ID" value="NC_011312.1"/>
</dbReference>
<dbReference type="SMR" id="B6EKL4"/>
<dbReference type="KEGG" id="vsa:VSAL_I2510"/>
<dbReference type="eggNOG" id="COG0585">
    <property type="taxonomic scope" value="Bacteria"/>
</dbReference>
<dbReference type="HOGENOM" id="CLU_005281_4_0_6"/>
<dbReference type="Proteomes" id="UP000001730">
    <property type="component" value="Chromosome 1"/>
</dbReference>
<dbReference type="GO" id="GO:0005829">
    <property type="term" value="C:cytosol"/>
    <property type="evidence" value="ECO:0007669"/>
    <property type="project" value="TreeGrafter"/>
</dbReference>
<dbReference type="GO" id="GO:0003723">
    <property type="term" value="F:RNA binding"/>
    <property type="evidence" value="ECO:0007669"/>
    <property type="project" value="InterPro"/>
</dbReference>
<dbReference type="GO" id="GO:0160150">
    <property type="term" value="F:tRNA pseudouridine(13) synthase activity"/>
    <property type="evidence" value="ECO:0007669"/>
    <property type="project" value="UniProtKB-EC"/>
</dbReference>
<dbReference type="GO" id="GO:0031119">
    <property type="term" value="P:tRNA pseudouridine synthesis"/>
    <property type="evidence" value="ECO:0007669"/>
    <property type="project" value="UniProtKB-UniRule"/>
</dbReference>
<dbReference type="CDD" id="cd02575">
    <property type="entry name" value="PseudoU_synth_EcTruD"/>
    <property type="match status" value="1"/>
</dbReference>
<dbReference type="Gene3D" id="3.30.2350.20">
    <property type="entry name" value="TruD, catalytic domain"/>
    <property type="match status" value="1"/>
</dbReference>
<dbReference type="Gene3D" id="3.30.2340.10">
    <property type="entry name" value="TruD, insertion domain"/>
    <property type="match status" value="1"/>
</dbReference>
<dbReference type="HAMAP" id="MF_01082">
    <property type="entry name" value="TruD"/>
    <property type="match status" value="1"/>
</dbReference>
<dbReference type="InterPro" id="IPR020103">
    <property type="entry name" value="PsdUridine_synth_cat_dom_sf"/>
</dbReference>
<dbReference type="InterPro" id="IPR001656">
    <property type="entry name" value="PsdUridine_synth_TruD"/>
</dbReference>
<dbReference type="InterPro" id="IPR020119">
    <property type="entry name" value="PsdUridine_synth_TruD_CS"/>
</dbReference>
<dbReference type="InterPro" id="IPR011760">
    <property type="entry name" value="PsdUridine_synth_TruD_insert"/>
</dbReference>
<dbReference type="InterPro" id="IPR042214">
    <property type="entry name" value="TruD_catalytic"/>
</dbReference>
<dbReference type="InterPro" id="IPR043165">
    <property type="entry name" value="TruD_insert_sf"/>
</dbReference>
<dbReference type="InterPro" id="IPR050170">
    <property type="entry name" value="TruD_pseudoU_synthase"/>
</dbReference>
<dbReference type="NCBIfam" id="NF002155">
    <property type="entry name" value="PRK00984.1-4"/>
    <property type="match status" value="1"/>
</dbReference>
<dbReference type="NCBIfam" id="TIGR00094">
    <property type="entry name" value="tRNA_TruD_broad"/>
    <property type="match status" value="1"/>
</dbReference>
<dbReference type="PANTHER" id="PTHR47811">
    <property type="entry name" value="TRNA PSEUDOURIDINE SYNTHASE D"/>
    <property type="match status" value="1"/>
</dbReference>
<dbReference type="PANTHER" id="PTHR47811:SF1">
    <property type="entry name" value="TRNA PSEUDOURIDINE SYNTHASE D"/>
    <property type="match status" value="1"/>
</dbReference>
<dbReference type="Pfam" id="PF01142">
    <property type="entry name" value="TruD"/>
    <property type="match status" value="2"/>
</dbReference>
<dbReference type="SUPFAM" id="SSF55120">
    <property type="entry name" value="Pseudouridine synthase"/>
    <property type="match status" value="1"/>
</dbReference>
<dbReference type="PROSITE" id="PS50984">
    <property type="entry name" value="TRUD"/>
    <property type="match status" value="1"/>
</dbReference>
<dbReference type="PROSITE" id="PS01268">
    <property type="entry name" value="UPF0024"/>
    <property type="match status" value="1"/>
</dbReference>
<comment type="function">
    <text evidence="1">Responsible for synthesis of pseudouridine from uracil-13 in transfer RNAs.</text>
</comment>
<comment type="catalytic activity">
    <reaction evidence="1">
        <text>uridine(13) in tRNA = pseudouridine(13) in tRNA</text>
        <dbReference type="Rhea" id="RHEA:42540"/>
        <dbReference type="Rhea" id="RHEA-COMP:10105"/>
        <dbReference type="Rhea" id="RHEA-COMP:10106"/>
        <dbReference type="ChEBI" id="CHEBI:65314"/>
        <dbReference type="ChEBI" id="CHEBI:65315"/>
        <dbReference type="EC" id="5.4.99.27"/>
    </reaction>
</comment>
<comment type="similarity">
    <text evidence="1">Belongs to the pseudouridine synthase TruD family.</text>
</comment>